<protein>
    <recommendedName>
        <fullName>Tail virion protein G9P</fullName>
    </recommendedName>
    <alternativeName>
        <fullName>Coat protein C, polypeptide II</fullName>
    </alternativeName>
    <alternativeName>
        <fullName>G9P</fullName>
    </alternativeName>
</protein>
<accession>P69537</accession>
<accession>P03677</accession>
<dbReference type="EMBL" id="V00606">
    <property type="protein sequence ID" value="CAA23870.1"/>
    <property type="molecule type" value="Genomic_DNA"/>
</dbReference>
<dbReference type="EMBL" id="J02448">
    <property type="protein sequence ID" value="AAA32213.1"/>
    <property type="molecule type" value="Genomic_DNA"/>
</dbReference>
<dbReference type="PIR" id="C04279">
    <property type="entry name" value="Z9BPF1"/>
</dbReference>
<dbReference type="RefSeq" id="YP_010775828.1">
    <property type="nucleotide sequence ID" value="NC_075025.1"/>
</dbReference>
<dbReference type="RefSeq" id="YP_010775838.1">
    <property type="nucleotide sequence ID" value="NC_075026.1"/>
</dbReference>
<dbReference type="RefSeq" id="YP_010775848.1">
    <property type="nucleotide sequence ID" value="NC_075027.1"/>
</dbReference>
<dbReference type="RefSeq" id="YP_010775858.1">
    <property type="nucleotide sequence ID" value="NC_075028.1"/>
</dbReference>
<dbReference type="RefSeq" id="YP_010775868.1">
    <property type="nucleotide sequence ID" value="NC_075029.1"/>
</dbReference>
<dbReference type="RefSeq" id="YP_010775878.1">
    <property type="nucleotide sequence ID" value="NC_075030.1"/>
</dbReference>
<dbReference type="RefSeq" id="YP_010775888.1">
    <property type="nucleotide sequence ID" value="NC_075031.1"/>
</dbReference>
<dbReference type="RefSeq" id="YP_010775898.1">
    <property type="nucleotide sequence ID" value="NC_075032.1"/>
</dbReference>
<dbReference type="RefSeq" id="YP_010775908.1">
    <property type="nucleotide sequence ID" value="NC_075033.1"/>
</dbReference>
<dbReference type="PDB" id="8B3P">
    <property type="method" value="EM"/>
    <property type="resolution" value="2.81 A"/>
    <property type="chains" value="FFF/GGG/HHH/III/JJJ=1-32"/>
</dbReference>
<dbReference type="PDBsum" id="8B3P"/>
<dbReference type="EMDB" id="EMD-15832"/>
<dbReference type="SMR" id="P69537"/>
<dbReference type="GeneID" id="80512433"/>
<dbReference type="GeneID" id="80512444"/>
<dbReference type="GeneID" id="80512452"/>
<dbReference type="GeneID" id="80512463"/>
<dbReference type="GeneID" id="80512474"/>
<dbReference type="GeneID" id="80512484"/>
<dbReference type="GeneID" id="80512496"/>
<dbReference type="GeneID" id="80512507"/>
<dbReference type="GeneID" id="80512518"/>
<dbReference type="Proteomes" id="UP000002557">
    <property type="component" value="Genome"/>
</dbReference>
<dbReference type="Proteomes" id="UP000241027">
    <property type="component" value="Genome"/>
</dbReference>
<dbReference type="GO" id="GO:0033644">
    <property type="term" value="C:host cell membrane"/>
    <property type="evidence" value="ECO:0007669"/>
    <property type="project" value="UniProtKB-SubCell"/>
</dbReference>
<dbReference type="GO" id="GO:0016020">
    <property type="term" value="C:membrane"/>
    <property type="evidence" value="ECO:0007669"/>
    <property type="project" value="UniProtKB-KW"/>
</dbReference>
<dbReference type="GO" id="GO:0044423">
    <property type="term" value="C:virion component"/>
    <property type="evidence" value="ECO:0007669"/>
    <property type="project" value="UniProtKB-KW"/>
</dbReference>
<sequence length="32" mass="3653">MSVLVYSFASFVLGWCLRSGITYFTRLMETSS</sequence>
<gene>
    <name type="primary">IX</name>
</gene>
<name>G9P_BPF1</name>
<comment type="function">
    <text evidence="1">May initiate with G7P the virion concomitant assembly-budding process, by interacting with the packaging signal of the viral genome. The assembly-budding takes place at the host inner membrane. In turn, G7P and G9P are present at the end of the filamentous virion that emerges first from the bacterial host (By similarity).</text>
</comment>
<comment type="subcellular location">
    <subcellularLocation>
        <location evidence="3">Virion</location>
    </subcellularLocation>
    <subcellularLocation>
        <location evidence="3">Host membrane</location>
        <topology evidence="3">Single-pass membrane protein</topology>
    </subcellularLocation>
    <text evidence="1">Prior to assembly, is found associated with the bacterial host inner membrane. There are about five copies of this protein per mature phage that are located on the tail side of the filamentous virion with G7P (By similarity).</text>
</comment>
<comment type="similarity">
    <text evidence="3">Belongs to the inovirus G9P protein family.</text>
</comment>
<keyword id="KW-0002">3D-structure</keyword>
<keyword id="KW-1043">Host membrane</keyword>
<keyword id="KW-0472">Membrane</keyword>
<keyword id="KW-0812">Transmembrane</keyword>
<keyword id="KW-1133">Transmembrane helix</keyword>
<keyword id="KW-0946">Virion</keyword>
<evidence type="ECO:0000250" key="1"/>
<evidence type="ECO:0000255" key="2"/>
<evidence type="ECO:0000305" key="3"/>
<proteinExistence type="evidence at protein level"/>
<feature type="chain" id="PRO_0000098182" description="Tail virion protein G9P">
    <location>
        <begin position="1"/>
        <end position="32"/>
    </location>
</feature>
<feature type="transmembrane region" description="Helical" evidence="2">
    <location>
        <begin position="8"/>
        <end position="24"/>
    </location>
</feature>
<organismHost>
    <name type="scientific">Escherichia coli</name>
    <dbReference type="NCBI Taxonomy" id="562"/>
</organismHost>
<reference key="1">
    <citation type="journal article" date="1981" name="Gene">
        <title>Nucleotide sequence and genome organisation of filamentous bacteriophages f1 and fd.</title>
        <authorList>
            <person name="Beck E."/>
            <person name="Zink B."/>
        </authorList>
    </citation>
    <scope>NUCLEOTIDE SEQUENCE [GENOMIC DNA]</scope>
</reference>
<reference key="2">
    <citation type="journal article" date="1980" name="J. Virol.">
        <title>Nucleotide sequences in bacteriophage f1 DNA: nucleotide sequence of genes V, VII, and VIII.</title>
        <authorList>
            <person name="Hill D.F."/>
            <person name="Petersen G.B."/>
        </authorList>
    </citation>
    <scope>NUCLEOTIDE SEQUENCE [GENOMIC DNA]</scope>
</reference>
<reference key="3">
    <citation type="journal article" date="1982" name="J. Virol.">
        <title>Nucleotide sequence of bacteriophage f1 DNA.</title>
        <authorList>
            <person name="Hill D.F."/>
            <person name="Petersen G.B."/>
        </authorList>
    </citation>
    <scope>NUCLEOTIDE SEQUENCE [GENOMIC DNA]</scope>
</reference>
<organism>
    <name type="scientific">Enterobacteria phage f1</name>
    <name type="common">Bacteriophage f1</name>
    <dbReference type="NCBI Taxonomy" id="10863"/>
    <lineage>
        <taxon>Viruses</taxon>
        <taxon>Monodnaviria</taxon>
        <taxon>Loebvirae</taxon>
        <taxon>Hofneiviricota</taxon>
        <taxon>Faserviricetes</taxon>
        <taxon>Tubulavirales</taxon>
        <taxon>Inoviridae</taxon>
        <taxon>Inovirus</taxon>
        <taxon>Enterobacteria phage M13</taxon>
    </lineage>
</organism>